<protein>
    <recommendedName>
        <fullName evidence="1">Large ribosomal subunit protein bL12</fullName>
    </recommendedName>
    <alternativeName>
        <fullName evidence="2">50S ribosomal protein L7/L12</fullName>
    </alternativeName>
</protein>
<organism>
    <name type="scientific">Anaplasma phagocytophilum (strain HZ)</name>
    <dbReference type="NCBI Taxonomy" id="212042"/>
    <lineage>
        <taxon>Bacteria</taxon>
        <taxon>Pseudomonadati</taxon>
        <taxon>Pseudomonadota</taxon>
        <taxon>Alphaproteobacteria</taxon>
        <taxon>Rickettsiales</taxon>
        <taxon>Anaplasmataceae</taxon>
        <taxon>Anaplasma</taxon>
        <taxon>phagocytophilum group</taxon>
    </lineage>
</organism>
<reference key="1">
    <citation type="journal article" date="2006" name="PLoS Genet.">
        <title>Comparative genomics of emerging human ehrlichiosis agents.</title>
        <authorList>
            <person name="Dunning Hotopp J.C."/>
            <person name="Lin M."/>
            <person name="Madupu R."/>
            <person name="Crabtree J."/>
            <person name="Angiuoli S.V."/>
            <person name="Eisen J.A."/>
            <person name="Seshadri R."/>
            <person name="Ren Q."/>
            <person name="Wu M."/>
            <person name="Utterback T.R."/>
            <person name="Smith S."/>
            <person name="Lewis M."/>
            <person name="Khouri H."/>
            <person name="Zhang C."/>
            <person name="Niu H."/>
            <person name="Lin Q."/>
            <person name="Ohashi N."/>
            <person name="Zhi N."/>
            <person name="Nelson W.C."/>
            <person name="Brinkac L.M."/>
            <person name="Dodson R.J."/>
            <person name="Rosovitz M.J."/>
            <person name="Sundaram J.P."/>
            <person name="Daugherty S.C."/>
            <person name="Davidsen T."/>
            <person name="Durkin A.S."/>
            <person name="Gwinn M.L."/>
            <person name="Haft D.H."/>
            <person name="Selengut J.D."/>
            <person name="Sullivan S.A."/>
            <person name="Zafar N."/>
            <person name="Zhou L."/>
            <person name="Benahmed F."/>
            <person name="Forberger H."/>
            <person name="Halpin R."/>
            <person name="Mulligan S."/>
            <person name="Robinson J."/>
            <person name="White O."/>
            <person name="Rikihisa Y."/>
            <person name="Tettelin H."/>
        </authorList>
    </citation>
    <scope>NUCLEOTIDE SEQUENCE [LARGE SCALE GENOMIC DNA]</scope>
    <source>
        <strain>HZ</strain>
    </source>
</reference>
<proteinExistence type="inferred from homology"/>
<dbReference type="EMBL" id="CP000235">
    <property type="protein sequence ID" value="ABD44138.1"/>
    <property type="molecule type" value="Genomic_DNA"/>
</dbReference>
<dbReference type="RefSeq" id="WP_011451097.1">
    <property type="nucleotide sequence ID" value="NC_007797.1"/>
</dbReference>
<dbReference type="SMR" id="Q2GJ67"/>
<dbReference type="STRING" id="212042.APH_1025"/>
<dbReference type="PaxDb" id="212042-APH_1025"/>
<dbReference type="EnsemblBacteria" id="ABD44138">
    <property type="protein sequence ID" value="ABD44138"/>
    <property type="gene ID" value="APH_1025"/>
</dbReference>
<dbReference type="GeneID" id="92748043"/>
<dbReference type="KEGG" id="aph:APH_1025"/>
<dbReference type="eggNOG" id="COG0222">
    <property type="taxonomic scope" value="Bacteria"/>
</dbReference>
<dbReference type="HOGENOM" id="CLU_086499_3_0_5"/>
<dbReference type="Proteomes" id="UP000001943">
    <property type="component" value="Chromosome"/>
</dbReference>
<dbReference type="GO" id="GO:1990904">
    <property type="term" value="C:ribonucleoprotein complex"/>
    <property type="evidence" value="ECO:0007669"/>
    <property type="project" value="UniProtKB-KW"/>
</dbReference>
<dbReference type="GO" id="GO:0005840">
    <property type="term" value="C:ribosome"/>
    <property type="evidence" value="ECO:0007669"/>
    <property type="project" value="UniProtKB-KW"/>
</dbReference>
<dbReference type="GO" id="GO:0003729">
    <property type="term" value="F:mRNA binding"/>
    <property type="evidence" value="ECO:0007669"/>
    <property type="project" value="TreeGrafter"/>
</dbReference>
<dbReference type="GO" id="GO:0003735">
    <property type="term" value="F:structural constituent of ribosome"/>
    <property type="evidence" value="ECO:0007669"/>
    <property type="project" value="InterPro"/>
</dbReference>
<dbReference type="GO" id="GO:0006412">
    <property type="term" value="P:translation"/>
    <property type="evidence" value="ECO:0007669"/>
    <property type="project" value="UniProtKB-UniRule"/>
</dbReference>
<dbReference type="CDD" id="cd00387">
    <property type="entry name" value="Ribosomal_L7_L12"/>
    <property type="match status" value="1"/>
</dbReference>
<dbReference type="FunFam" id="3.30.1390.10:FF:000001">
    <property type="entry name" value="50S ribosomal protein L7/L12"/>
    <property type="match status" value="1"/>
</dbReference>
<dbReference type="Gene3D" id="3.30.1390.10">
    <property type="match status" value="1"/>
</dbReference>
<dbReference type="Gene3D" id="1.20.5.710">
    <property type="entry name" value="Single helix bin"/>
    <property type="match status" value="1"/>
</dbReference>
<dbReference type="HAMAP" id="MF_00368">
    <property type="entry name" value="Ribosomal_bL12"/>
    <property type="match status" value="1"/>
</dbReference>
<dbReference type="InterPro" id="IPR000206">
    <property type="entry name" value="Ribosomal_bL12"/>
</dbReference>
<dbReference type="InterPro" id="IPR013823">
    <property type="entry name" value="Ribosomal_bL12_C"/>
</dbReference>
<dbReference type="InterPro" id="IPR014719">
    <property type="entry name" value="Ribosomal_bL12_C/ClpS-like"/>
</dbReference>
<dbReference type="InterPro" id="IPR036235">
    <property type="entry name" value="Ribosomal_bL12_oligo_N_sf"/>
</dbReference>
<dbReference type="NCBIfam" id="TIGR00855">
    <property type="entry name" value="L12"/>
    <property type="match status" value="1"/>
</dbReference>
<dbReference type="PANTHER" id="PTHR45987">
    <property type="entry name" value="39S RIBOSOMAL PROTEIN L12"/>
    <property type="match status" value="1"/>
</dbReference>
<dbReference type="PANTHER" id="PTHR45987:SF4">
    <property type="entry name" value="LARGE RIBOSOMAL SUBUNIT PROTEIN BL12M"/>
    <property type="match status" value="1"/>
</dbReference>
<dbReference type="Pfam" id="PF00542">
    <property type="entry name" value="Ribosomal_L12"/>
    <property type="match status" value="1"/>
</dbReference>
<dbReference type="SUPFAM" id="SSF54736">
    <property type="entry name" value="ClpS-like"/>
    <property type="match status" value="1"/>
</dbReference>
<dbReference type="SUPFAM" id="SSF48300">
    <property type="entry name" value="Ribosomal protein L7/12, oligomerisation (N-terminal) domain"/>
    <property type="match status" value="1"/>
</dbReference>
<evidence type="ECO:0000255" key="1">
    <source>
        <dbReference type="HAMAP-Rule" id="MF_00368"/>
    </source>
</evidence>
<evidence type="ECO:0000305" key="2"/>
<keyword id="KW-0687">Ribonucleoprotein</keyword>
<keyword id="KW-0689">Ribosomal protein</keyword>
<comment type="function">
    <text evidence="1">Forms part of the ribosomal stalk which helps the ribosome interact with GTP-bound translation factors. Is thus essential for accurate translation.</text>
</comment>
<comment type="subunit">
    <text evidence="1">Homodimer. Part of the ribosomal stalk of the 50S ribosomal subunit. Forms a multimeric L10(L12)X complex, where L10 forms an elongated spine to which 2 to 4 L12 dimers bind in a sequential fashion. Binds GTP-bound translation factors.</text>
</comment>
<comment type="similarity">
    <text evidence="1">Belongs to the bacterial ribosomal protein bL12 family.</text>
</comment>
<sequence>MSSVDLDDLVEKICALDLCSAAALVEKIEEKLGFPKGGLMASVSAAGSASQGAGGAAEAEKTEFIVMFDGYAADKKIAVIKAVRECTSLGLKEAKDFVEQEGSRELIEGKKYKKAEAEEVKKKLEDAGAQVSLK</sequence>
<feature type="chain" id="PRO_1000195764" description="Large ribosomal subunit protein bL12">
    <location>
        <begin position="1"/>
        <end position="134"/>
    </location>
</feature>
<accession>Q2GJ67</accession>
<gene>
    <name evidence="1" type="primary">rplL</name>
    <name type="ordered locus">APH_1025</name>
</gene>
<name>RL7_ANAPZ</name>